<dbReference type="EMBL" id="CP000075">
    <property type="protein sequence ID" value="AAY38739.1"/>
    <property type="molecule type" value="Genomic_DNA"/>
</dbReference>
<dbReference type="RefSeq" id="WP_003407743.1">
    <property type="nucleotide sequence ID" value="NC_007005.1"/>
</dbReference>
<dbReference type="RefSeq" id="YP_236777.1">
    <property type="nucleotide sequence ID" value="NC_007005.1"/>
</dbReference>
<dbReference type="SMR" id="Q4ZQ33"/>
<dbReference type="STRING" id="205918.Psyr_3707"/>
<dbReference type="KEGG" id="psb:Psyr_3707"/>
<dbReference type="PATRIC" id="fig|205918.7.peg.3810"/>
<dbReference type="eggNOG" id="COG1301">
    <property type="taxonomic scope" value="Bacteria"/>
</dbReference>
<dbReference type="HOGENOM" id="CLU_019375_7_0_6"/>
<dbReference type="OrthoDB" id="9766690at2"/>
<dbReference type="Proteomes" id="UP000000426">
    <property type="component" value="Chromosome"/>
</dbReference>
<dbReference type="GO" id="GO:0005886">
    <property type="term" value="C:plasma membrane"/>
    <property type="evidence" value="ECO:0007669"/>
    <property type="project" value="UniProtKB-SubCell"/>
</dbReference>
<dbReference type="GO" id="GO:0015138">
    <property type="term" value="F:fumarate transmembrane transporter activity"/>
    <property type="evidence" value="ECO:0007669"/>
    <property type="project" value="TreeGrafter"/>
</dbReference>
<dbReference type="GO" id="GO:0015366">
    <property type="term" value="F:malate:proton symporter activity"/>
    <property type="evidence" value="ECO:0007669"/>
    <property type="project" value="TreeGrafter"/>
</dbReference>
<dbReference type="GO" id="GO:0015141">
    <property type="term" value="F:succinate transmembrane transporter activity"/>
    <property type="evidence" value="ECO:0007669"/>
    <property type="project" value="TreeGrafter"/>
</dbReference>
<dbReference type="GO" id="GO:0070778">
    <property type="term" value="P:L-aspartate transmembrane transport"/>
    <property type="evidence" value="ECO:0007669"/>
    <property type="project" value="TreeGrafter"/>
</dbReference>
<dbReference type="FunFam" id="1.10.3860.10:FF:000001">
    <property type="entry name" value="C4-dicarboxylate transport protein"/>
    <property type="match status" value="1"/>
</dbReference>
<dbReference type="Gene3D" id="1.10.3860.10">
    <property type="entry name" value="Sodium:dicarboxylate symporter"/>
    <property type="match status" value="1"/>
</dbReference>
<dbReference type="HAMAP" id="MF_01300">
    <property type="entry name" value="C4_dicarb_transport"/>
    <property type="match status" value="1"/>
</dbReference>
<dbReference type="InterPro" id="IPR023954">
    <property type="entry name" value="C4_dicarb_transport"/>
</dbReference>
<dbReference type="InterPro" id="IPR001991">
    <property type="entry name" value="Na-dicarboxylate_symporter"/>
</dbReference>
<dbReference type="InterPro" id="IPR018107">
    <property type="entry name" value="Na-dicarboxylate_symporter_CS"/>
</dbReference>
<dbReference type="InterPro" id="IPR036458">
    <property type="entry name" value="Na:dicarbo_symporter_sf"/>
</dbReference>
<dbReference type="NCBIfam" id="NF002461">
    <property type="entry name" value="PRK01663.1"/>
    <property type="match status" value="1"/>
</dbReference>
<dbReference type="NCBIfam" id="NF009587">
    <property type="entry name" value="PRK13027.1"/>
    <property type="match status" value="1"/>
</dbReference>
<dbReference type="PANTHER" id="PTHR42865:SF1">
    <property type="entry name" value="AEROBIC C4-DICARBOXYLATE TRANSPORT PROTEIN"/>
    <property type="match status" value="1"/>
</dbReference>
<dbReference type="PANTHER" id="PTHR42865">
    <property type="entry name" value="PROTON/GLUTAMATE-ASPARTATE SYMPORTER"/>
    <property type="match status" value="1"/>
</dbReference>
<dbReference type="Pfam" id="PF00375">
    <property type="entry name" value="SDF"/>
    <property type="match status" value="1"/>
</dbReference>
<dbReference type="PRINTS" id="PR00173">
    <property type="entry name" value="EDTRNSPORT"/>
</dbReference>
<dbReference type="SUPFAM" id="SSF118215">
    <property type="entry name" value="Proton glutamate symport protein"/>
    <property type="match status" value="1"/>
</dbReference>
<dbReference type="PROSITE" id="PS00713">
    <property type="entry name" value="NA_DICARBOXYL_SYMP_1"/>
    <property type="match status" value="1"/>
</dbReference>
<dbReference type="PROSITE" id="PS00714">
    <property type="entry name" value="NA_DICARBOXYL_SYMP_2"/>
    <property type="match status" value="1"/>
</dbReference>
<feature type="chain" id="PRO_1000067457" description="C4-dicarboxylate transport protein">
    <location>
        <begin position="1"/>
        <end position="450"/>
    </location>
</feature>
<feature type="transmembrane region" description="Helical" evidence="1">
    <location>
        <begin position="10"/>
        <end position="30"/>
    </location>
</feature>
<feature type="transmembrane region" description="Helical" evidence="1">
    <location>
        <begin position="46"/>
        <end position="66"/>
    </location>
</feature>
<feature type="transmembrane region" description="Helical" evidence="1">
    <location>
        <begin position="78"/>
        <end position="98"/>
    </location>
</feature>
<feature type="transmembrane region" description="Helical" evidence="1">
    <location>
        <begin position="143"/>
        <end position="163"/>
    </location>
</feature>
<feature type="transmembrane region" description="Helical" evidence="1">
    <location>
        <begin position="190"/>
        <end position="210"/>
    </location>
</feature>
<feature type="transmembrane region" description="Helical" evidence="1">
    <location>
        <begin position="224"/>
        <end position="244"/>
    </location>
</feature>
<feature type="transmembrane region" description="Helical" evidence="1">
    <location>
        <begin position="291"/>
        <end position="311"/>
    </location>
</feature>
<feature type="transmembrane region" description="Helical" evidence="1">
    <location>
        <begin position="332"/>
        <end position="352"/>
    </location>
</feature>
<feature type="transmembrane region" description="Helical" evidence="1">
    <location>
        <begin position="354"/>
        <end position="374"/>
    </location>
</feature>
<feature type="region of interest" description="Disordered" evidence="2">
    <location>
        <begin position="428"/>
        <end position="450"/>
    </location>
</feature>
<keyword id="KW-0997">Cell inner membrane</keyword>
<keyword id="KW-1003">Cell membrane</keyword>
<keyword id="KW-0472">Membrane</keyword>
<keyword id="KW-0769">Symport</keyword>
<keyword id="KW-0812">Transmembrane</keyword>
<keyword id="KW-1133">Transmembrane helix</keyword>
<keyword id="KW-0813">Transport</keyword>
<name>DCTA_PSEU2</name>
<proteinExistence type="inferred from homology"/>
<evidence type="ECO:0000255" key="1">
    <source>
        <dbReference type="HAMAP-Rule" id="MF_01300"/>
    </source>
</evidence>
<evidence type="ECO:0000256" key="2">
    <source>
        <dbReference type="SAM" id="MobiDB-lite"/>
    </source>
</evidence>
<protein>
    <recommendedName>
        <fullName evidence="1">C4-dicarboxylate transport protein</fullName>
    </recommendedName>
</protein>
<reference key="1">
    <citation type="journal article" date="2005" name="Proc. Natl. Acad. Sci. U.S.A.">
        <title>Comparison of the complete genome sequences of Pseudomonas syringae pv. syringae B728a and pv. tomato DC3000.</title>
        <authorList>
            <person name="Feil H."/>
            <person name="Feil W.S."/>
            <person name="Chain P."/>
            <person name="Larimer F."/>
            <person name="Dibartolo G."/>
            <person name="Copeland A."/>
            <person name="Lykidis A."/>
            <person name="Trong S."/>
            <person name="Nolan M."/>
            <person name="Goltsman E."/>
            <person name="Thiel J."/>
            <person name="Malfatti S."/>
            <person name="Loper J.E."/>
            <person name="Lapidus A."/>
            <person name="Detter J.C."/>
            <person name="Land M."/>
            <person name="Richardson P.M."/>
            <person name="Kyrpides N.C."/>
            <person name="Ivanova N."/>
            <person name="Lindow S.E."/>
        </authorList>
    </citation>
    <scope>NUCLEOTIDE SEQUENCE [LARGE SCALE GENOMIC DNA]</scope>
    <source>
        <strain>B728a</strain>
    </source>
</reference>
<comment type="function">
    <text evidence="1">Responsible for the transport of dicarboxylates such as succinate, fumarate, and malate from the periplasm across the membrane.</text>
</comment>
<comment type="subcellular location">
    <subcellularLocation>
        <location evidence="1">Cell inner membrane</location>
        <topology evidence="1">Multi-pass membrane protein</topology>
    </subcellularLocation>
</comment>
<comment type="similarity">
    <text evidence="1">Belongs to the dicarboxylate/amino acid:cation symporter (DAACS) (TC 2.A.23) family.</text>
</comment>
<gene>
    <name evidence="1" type="primary">dctA</name>
    <name type="ordered locus">Psyr_3707</name>
</gene>
<accession>Q4ZQ33</accession>
<organism>
    <name type="scientific">Pseudomonas syringae pv. syringae (strain B728a)</name>
    <dbReference type="NCBI Taxonomy" id="205918"/>
    <lineage>
        <taxon>Bacteria</taxon>
        <taxon>Pseudomonadati</taxon>
        <taxon>Pseudomonadota</taxon>
        <taxon>Gammaproteobacteria</taxon>
        <taxon>Pseudomonadales</taxon>
        <taxon>Pseudomonadaceae</taxon>
        <taxon>Pseudomonas</taxon>
        <taxon>Pseudomonas syringae</taxon>
    </lineage>
</organism>
<sequence length="450" mass="47484">MTTRQPIYKSLYFQVIVAIVIGILIGHFYPDTGKALKPLGDGFIKLIKMVIAPIIFCTVVSGIAGMQSMKSVGKTGGYALLYFEIVSTIALLIGLIVVNVVQPGAGMNIDVSTLDASKIAAYVTAGQDQSIVGFILNVIPNTIVGAFANGDILQVLMFSVIFGFALHRLGAYGKPVLDFIDRFAHVMFNIINMIMKLAPLGAFGAMAFTIGAYGVSSLVQLGQLMICFYITCALFVVFVLGAIARAHGFSIFKLIRYIREELLIVLGTSSSESALPRMLIKMERLGAKKSVVGLVIPTGYSFNLDGTSIYLTMAAVFIAQATNTHMDITHQITLLLVLLLSSKGAAGVTGSGFIVLAATLSAVGHLPVAGLALILGIDRFMSEARALTNLVGNAVATVVVAKWVGELDTDKLQSELASGGSAILETRPEDDLGVAEGPTPGAAVNTTKTV</sequence>